<accession>Q8ZBZ0</accession>
<accession>Q0WC46</accession>
<feature type="chain" id="PRO_0000214210" description="Na(+)-translocating NADH-quinone reductase subunit A">
    <location>
        <begin position="1"/>
        <end position="447"/>
    </location>
</feature>
<dbReference type="EC" id="7.2.1.1" evidence="1"/>
<dbReference type="EMBL" id="AL590842">
    <property type="protein sequence ID" value="CAL21834.1"/>
    <property type="molecule type" value="Genomic_DNA"/>
</dbReference>
<dbReference type="EMBL" id="AE009952">
    <property type="protein sequence ID" value="AAM84532.1"/>
    <property type="status" value="ALT_INIT"/>
    <property type="molecule type" value="Genomic_DNA"/>
</dbReference>
<dbReference type="EMBL" id="AE017042">
    <property type="protein sequence ID" value="AAS60959.1"/>
    <property type="status" value="ALT_INIT"/>
    <property type="molecule type" value="Genomic_DNA"/>
</dbReference>
<dbReference type="PIR" id="AG0393">
    <property type="entry name" value="AG0393"/>
</dbReference>
<dbReference type="RefSeq" id="WP_002208717.1">
    <property type="nucleotide sequence ID" value="NZ_WUCM01000034.1"/>
</dbReference>
<dbReference type="RefSeq" id="YP_002348142.1">
    <property type="nucleotide sequence ID" value="NC_003143.1"/>
</dbReference>
<dbReference type="SMR" id="Q8ZBZ0"/>
<dbReference type="STRING" id="214092.YPO3240"/>
<dbReference type="PaxDb" id="214092-YPO3240"/>
<dbReference type="DNASU" id="1145898"/>
<dbReference type="EnsemblBacteria" id="AAS60959">
    <property type="protein sequence ID" value="AAS60959"/>
    <property type="gene ID" value="YP_0693"/>
</dbReference>
<dbReference type="KEGG" id="ype:YPO3240"/>
<dbReference type="KEGG" id="ypk:y0951"/>
<dbReference type="KEGG" id="ypm:YP_0693"/>
<dbReference type="PATRIC" id="fig|214092.21.peg.3700"/>
<dbReference type="eggNOG" id="COG1726">
    <property type="taxonomic scope" value="Bacteria"/>
</dbReference>
<dbReference type="HOGENOM" id="CLU_046656_0_0_6"/>
<dbReference type="OMA" id="VGMKPTM"/>
<dbReference type="OrthoDB" id="9774536at2"/>
<dbReference type="Proteomes" id="UP000000815">
    <property type="component" value="Chromosome"/>
</dbReference>
<dbReference type="Proteomes" id="UP000001019">
    <property type="component" value="Chromosome"/>
</dbReference>
<dbReference type="Proteomes" id="UP000002490">
    <property type="component" value="Chromosome"/>
</dbReference>
<dbReference type="GO" id="GO:0016655">
    <property type="term" value="F:oxidoreductase activity, acting on NAD(P)H, quinone or similar compound as acceptor"/>
    <property type="evidence" value="ECO:0007669"/>
    <property type="project" value="UniProtKB-UniRule"/>
</dbReference>
<dbReference type="GO" id="GO:0006814">
    <property type="term" value="P:sodium ion transport"/>
    <property type="evidence" value="ECO:0007669"/>
    <property type="project" value="UniProtKB-UniRule"/>
</dbReference>
<dbReference type="HAMAP" id="MF_00425">
    <property type="entry name" value="NqrA"/>
    <property type="match status" value="1"/>
</dbReference>
<dbReference type="InterPro" id="IPR008703">
    <property type="entry name" value="NqrA"/>
</dbReference>
<dbReference type="InterPro" id="IPR056148">
    <property type="entry name" value="NQRA_2nd"/>
</dbReference>
<dbReference type="InterPro" id="IPR022615">
    <property type="entry name" value="NqrA_C_domain"/>
</dbReference>
<dbReference type="InterPro" id="IPR056147">
    <property type="entry name" value="NQRA_N"/>
</dbReference>
<dbReference type="NCBIfam" id="TIGR01936">
    <property type="entry name" value="nqrA"/>
    <property type="match status" value="1"/>
</dbReference>
<dbReference type="NCBIfam" id="NF003759">
    <property type="entry name" value="PRK05352.1-2"/>
    <property type="match status" value="1"/>
</dbReference>
<dbReference type="NCBIfam" id="NF003761">
    <property type="entry name" value="PRK05352.1-4"/>
    <property type="match status" value="1"/>
</dbReference>
<dbReference type="PANTHER" id="PTHR37839">
    <property type="entry name" value="NA(+)-TRANSLOCATING NADH-QUINONE REDUCTASE SUBUNIT A"/>
    <property type="match status" value="1"/>
</dbReference>
<dbReference type="PANTHER" id="PTHR37839:SF1">
    <property type="entry name" value="NA(+)-TRANSLOCATING NADH-QUINONE REDUCTASE SUBUNIT A"/>
    <property type="match status" value="1"/>
</dbReference>
<dbReference type="Pfam" id="PF24836">
    <property type="entry name" value="NQRA_2nd"/>
    <property type="match status" value="1"/>
</dbReference>
<dbReference type="Pfam" id="PF05896">
    <property type="entry name" value="NQRA_N"/>
    <property type="match status" value="1"/>
</dbReference>
<dbReference type="Pfam" id="PF11973">
    <property type="entry name" value="NQRA_SLBB"/>
    <property type="match status" value="1"/>
</dbReference>
<gene>
    <name evidence="1" type="primary">nqrA</name>
    <name type="ordered locus">YPO3240</name>
    <name type="ordered locus">y0951</name>
    <name type="ordered locus">YP_0693</name>
</gene>
<protein>
    <recommendedName>
        <fullName evidence="1">Na(+)-translocating NADH-quinone reductase subunit A</fullName>
        <shortName evidence="1">Na(+)-NQR subunit A</shortName>
        <shortName evidence="1">Na(+)-translocating NQR subunit A</shortName>
        <ecNumber evidence="1">7.2.1.1</ecNumber>
    </recommendedName>
    <alternativeName>
        <fullName evidence="1">NQR complex subunit A</fullName>
    </alternativeName>
    <alternativeName>
        <fullName evidence="1">NQR-1 subunit A</fullName>
    </alternativeName>
</protein>
<sequence>MIKIKKGLDLPIAGAPVQTIQDGPAIHHVALLGEEYVGMRPSMLVQEGDQVKKGQALFEDKKNPGVLFTAPASGKISAINRGERRVLQSVVIEVEGDEQIPFEHYAAEELNQLSDEQVQHHLLTSGLWTALRTRPFSKTPVPGSRPRAIFISAMDTQPLAADPQVIIATESEAFNHGLTVLTRLTDGKVHVCHAAGQAVTRHTNTQVTYNEFSGPHPAGLVGTHIHFLEPVSQTKMVWHVGYQDVIAIGKLFTRGELCTDRIVALAGPQVNQPILLRTRLGASLSELTAGKLKEGDNRIISGSVLSGTAFSATHGYLGRFHQQVSVIREGREKELFGWVMPGRDKYSITRTTLGHFFKRKLFAFSTDMHGGERAMVPIGNYERVMPLDILATHLLRDLLAGDTDSAQALGCLELDEEDLALCTFVCPGKYEYGPVLRDILTQIEQEG</sequence>
<keyword id="KW-0406">Ion transport</keyword>
<keyword id="KW-0520">NAD</keyword>
<keyword id="KW-1185">Reference proteome</keyword>
<keyword id="KW-0915">Sodium</keyword>
<keyword id="KW-0739">Sodium transport</keyword>
<keyword id="KW-1278">Translocase</keyword>
<keyword id="KW-0813">Transport</keyword>
<keyword id="KW-0830">Ubiquinone</keyword>
<reference key="1">
    <citation type="journal article" date="2001" name="Nature">
        <title>Genome sequence of Yersinia pestis, the causative agent of plague.</title>
        <authorList>
            <person name="Parkhill J."/>
            <person name="Wren B.W."/>
            <person name="Thomson N.R."/>
            <person name="Titball R.W."/>
            <person name="Holden M.T.G."/>
            <person name="Prentice M.B."/>
            <person name="Sebaihia M."/>
            <person name="James K.D."/>
            <person name="Churcher C.M."/>
            <person name="Mungall K.L."/>
            <person name="Baker S."/>
            <person name="Basham D."/>
            <person name="Bentley S.D."/>
            <person name="Brooks K."/>
            <person name="Cerdeno-Tarraga A.-M."/>
            <person name="Chillingworth T."/>
            <person name="Cronin A."/>
            <person name="Davies R.M."/>
            <person name="Davis P."/>
            <person name="Dougan G."/>
            <person name="Feltwell T."/>
            <person name="Hamlin N."/>
            <person name="Holroyd S."/>
            <person name="Jagels K."/>
            <person name="Karlyshev A.V."/>
            <person name="Leather S."/>
            <person name="Moule S."/>
            <person name="Oyston P.C.F."/>
            <person name="Quail M.A."/>
            <person name="Rutherford K.M."/>
            <person name="Simmonds M."/>
            <person name="Skelton J."/>
            <person name="Stevens K."/>
            <person name="Whitehead S."/>
            <person name="Barrell B.G."/>
        </authorList>
    </citation>
    <scope>NUCLEOTIDE SEQUENCE [LARGE SCALE GENOMIC DNA]</scope>
    <source>
        <strain>CO-92 / Biovar Orientalis</strain>
    </source>
</reference>
<reference key="2">
    <citation type="journal article" date="2002" name="J. Bacteriol.">
        <title>Genome sequence of Yersinia pestis KIM.</title>
        <authorList>
            <person name="Deng W."/>
            <person name="Burland V."/>
            <person name="Plunkett G. III"/>
            <person name="Boutin A."/>
            <person name="Mayhew G.F."/>
            <person name="Liss P."/>
            <person name="Perna N.T."/>
            <person name="Rose D.J."/>
            <person name="Mau B."/>
            <person name="Zhou S."/>
            <person name="Schwartz D.C."/>
            <person name="Fetherston J.D."/>
            <person name="Lindler L.E."/>
            <person name="Brubaker R.R."/>
            <person name="Plano G.V."/>
            <person name="Straley S.C."/>
            <person name="McDonough K.A."/>
            <person name="Nilles M.L."/>
            <person name="Matson J.S."/>
            <person name="Blattner F.R."/>
            <person name="Perry R.D."/>
        </authorList>
    </citation>
    <scope>NUCLEOTIDE SEQUENCE [LARGE SCALE GENOMIC DNA]</scope>
    <source>
        <strain>KIM10+ / Biovar Mediaevalis</strain>
    </source>
</reference>
<reference key="3">
    <citation type="journal article" date="2004" name="DNA Res.">
        <title>Complete genome sequence of Yersinia pestis strain 91001, an isolate avirulent to humans.</title>
        <authorList>
            <person name="Song Y."/>
            <person name="Tong Z."/>
            <person name="Wang J."/>
            <person name="Wang L."/>
            <person name="Guo Z."/>
            <person name="Han Y."/>
            <person name="Zhang J."/>
            <person name="Pei D."/>
            <person name="Zhou D."/>
            <person name="Qin H."/>
            <person name="Pang X."/>
            <person name="Han Y."/>
            <person name="Zhai J."/>
            <person name="Li M."/>
            <person name="Cui B."/>
            <person name="Qi Z."/>
            <person name="Jin L."/>
            <person name="Dai R."/>
            <person name="Chen F."/>
            <person name="Li S."/>
            <person name="Ye C."/>
            <person name="Du Z."/>
            <person name="Lin W."/>
            <person name="Wang J."/>
            <person name="Yu J."/>
            <person name="Yang H."/>
            <person name="Wang J."/>
            <person name="Huang P."/>
            <person name="Yang R."/>
        </authorList>
    </citation>
    <scope>NUCLEOTIDE SEQUENCE [LARGE SCALE GENOMIC DNA]</scope>
    <source>
        <strain>91001 / Biovar Mediaevalis</strain>
    </source>
</reference>
<evidence type="ECO:0000255" key="1">
    <source>
        <dbReference type="HAMAP-Rule" id="MF_00425"/>
    </source>
</evidence>
<evidence type="ECO:0000305" key="2"/>
<comment type="function">
    <text evidence="1">NQR complex catalyzes the reduction of ubiquinone-1 to ubiquinol by two successive reactions, coupled with the transport of Na(+) ions from the cytoplasm to the periplasm. NqrA to NqrE are probably involved in the second step, the conversion of ubisemiquinone to ubiquinol.</text>
</comment>
<comment type="catalytic activity">
    <reaction evidence="1">
        <text>a ubiquinone + n Na(+)(in) + NADH + H(+) = a ubiquinol + n Na(+)(out) + NAD(+)</text>
        <dbReference type="Rhea" id="RHEA:47748"/>
        <dbReference type="Rhea" id="RHEA-COMP:9565"/>
        <dbReference type="Rhea" id="RHEA-COMP:9566"/>
        <dbReference type="ChEBI" id="CHEBI:15378"/>
        <dbReference type="ChEBI" id="CHEBI:16389"/>
        <dbReference type="ChEBI" id="CHEBI:17976"/>
        <dbReference type="ChEBI" id="CHEBI:29101"/>
        <dbReference type="ChEBI" id="CHEBI:57540"/>
        <dbReference type="ChEBI" id="CHEBI:57945"/>
        <dbReference type="EC" id="7.2.1.1"/>
    </reaction>
</comment>
<comment type="subunit">
    <text evidence="1">Composed of six subunits; NqrA, NqrB, NqrC, NqrD, NqrE and NqrF.</text>
</comment>
<comment type="similarity">
    <text evidence="1">Belongs to the NqrA family.</text>
</comment>
<comment type="sequence caution" evidence="2">
    <conflict type="erroneous initiation">
        <sequence resource="EMBL-CDS" id="AAM84532"/>
    </conflict>
</comment>
<comment type="sequence caution" evidence="2">
    <conflict type="erroneous initiation">
        <sequence resource="EMBL-CDS" id="AAS60959"/>
    </conflict>
</comment>
<proteinExistence type="inferred from homology"/>
<organism>
    <name type="scientific">Yersinia pestis</name>
    <dbReference type="NCBI Taxonomy" id="632"/>
    <lineage>
        <taxon>Bacteria</taxon>
        <taxon>Pseudomonadati</taxon>
        <taxon>Pseudomonadota</taxon>
        <taxon>Gammaproteobacteria</taxon>
        <taxon>Enterobacterales</taxon>
        <taxon>Yersiniaceae</taxon>
        <taxon>Yersinia</taxon>
    </lineage>
</organism>
<name>NQRA_YERPE</name>